<dbReference type="EMBL" id="Z30328">
    <property type="protein sequence ID" value="CAA82986.1"/>
    <property type="molecule type" value="Genomic_DNA"/>
</dbReference>
<dbReference type="RefSeq" id="NP_059711.1">
    <property type="nucleotide sequence ID" value="NC_002377.1"/>
</dbReference>
<dbReference type="SMR" id="P0A4F9"/>
<dbReference type="GO" id="GO:0016020">
    <property type="term" value="C:membrane"/>
    <property type="evidence" value="ECO:0007669"/>
    <property type="project" value="InterPro"/>
</dbReference>
<dbReference type="GO" id="GO:0030288">
    <property type="term" value="C:outer membrane-bounded periplasmic space"/>
    <property type="evidence" value="ECO:0007669"/>
    <property type="project" value="InterPro"/>
</dbReference>
<dbReference type="GO" id="GO:0015276">
    <property type="term" value="F:ligand-gated monoatomic ion channel activity"/>
    <property type="evidence" value="ECO:0007669"/>
    <property type="project" value="InterPro"/>
</dbReference>
<dbReference type="CDD" id="cd13699">
    <property type="entry name" value="PBP2_OccT_like"/>
    <property type="match status" value="1"/>
</dbReference>
<dbReference type="Gene3D" id="3.40.190.10">
    <property type="entry name" value="Periplasmic binding protein-like II"/>
    <property type="match status" value="2"/>
</dbReference>
<dbReference type="InterPro" id="IPR001320">
    <property type="entry name" value="Iontro_rcpt_C"/>
</dbReference>
<dbReference type="InterPro" id="IPR005768">
    <property type="entry name" value="Lys_Arg_Orn-bd"/>
</dbReference>
<dbReference type="InterPro" id="IPR018313">
    <property type="entry name" value="SBP_3_CS"/>
</dbReference>
<dbReference type="InterPro" id="IPR001638">
    <property type="entry name" value="Solute-binding_3/MltF_N"/>
</dbReference>
<dbReference type="NCBIfam" id="TIGR01096">
    <property type="entry name" value="3A0103s03R"/>
    <property type="match status" value="1"/>
</dbReference>
<dbReference type="PANTHER" id="PTHR35936:SF19">
    <property type="entry name" value="AMINO-ACID-BINDING PROTEIN YXEM-RELATED"/>
    <property type="match status" value="1"/>
</dbReference>
<dbReference type="PANTHER" id="PTHR35936">
    <property type="entry name" value="MEMBRANE-BOUND LYTIC MUREIN TRANSGLYCOSYLASE F"/>
    <property type="match status" value="1"/>
</dbReference>
<dbReference type="Pfam" id="PF00497">
    <property type="entry name" value="SBP_bac_3"/>
    <property type="match status" value="1"/>
</dbReference>
<dbReference type="SMART" id="SM00062">
    <property type="entry name" value="PBPb"/>
    <property type="match status" value="1"/>
</dbReference>
<dbReference type="SMART" id="SM00079">
    <property type="entry name" value="PBPe"/>
    <property type="match status" value="1"/>
</dbReference>
<dbReference type="SUPFAM" id="SSF53850">
    <property type="entry name" value="Periplasmic binding protein-like II"/>
    <property type="match status" value="1"/>
</dbReference>
<dbReference type="PROSITE" id="PS01039">
    <property type="entry name" value="SBP_BACTERIAL_3"/>
    <property type="match status" value="1"/>
</dbReference>
<sequence length="276" mass="28986">MKLKTILCAALLLVAGQAAAQEKSITIATEGGYAPWNFSGPGGKLDGFEIDLANALCEKMKAKCQIVAQNWDGIMPSLTGKKYDAIMAAMSVTPKRQEVIGFSIPYAAGINGFAVMGDSKLAEMPGLGETYSLDSQADAAKKAIADISSFLNGTTVGVQGSTTASTFLDKYFKGSVDIKEYKSVEEHNLDLTSGRLDAVLANATVLAAAIEKPEMKGAKLVGPLFSGGEFGVVAVGLRKEDTALKADFDAAIKAASEDGTIKTLSLKWFKVDVTPQ</sequence>
<reference key="1">
    <citation type="book" date="1992" name="Guanidino compounds in biology and medicine">
        <title>Catabolism of the guanidino compounds nopaline, octopine, and L-arginine in Agrobacterium tumefaciens: enzymes, genes, and regulation.</title>
        <editorList>
            <person name="De Deyn P.P."/>
            <person name="Marescau B."/>
            <person name="Stalon V."/>
            <person name="Qureshi I.A."/>
        </editorList>
        <authorList>
            <person name="Schroeder J."/>
            <person name="von Lintig J."/>
            <person name="Zanker H."/>
        </authorList>
    </citation>
    <scope>NUCLEOTIDE SEQUENCE [GENOMIC DNA]</scope>
</reference>
<organism>
    <name type="scientific">Agrobacterium tumefaciens (strain Ach5)</name>
    <dbReference type="NCBI Taxonomy" id="176298"/>
    <lineage>
        <taxon>Bacteria</taxon>
        <taxon>Pseudomonadati</taxon>
        <taxon>Pseudomonadota</taxon>
        <taxon>Alphaproteobacteria</taxon>
        <taxon>Hyphomicrobiales</taxon>
        <taxon>Rhizobiaceae</taxon>
        <taxon>Rhizobium/Agrobacterium group</taxon>
        <taxon>Agrobacterium</taxon>
        <taxon>Agrobacterium tumefaciens complex</taxon>
    </lineage>
</organism>
<keyword id="KW-1015">Disulfide bond</keyword>
<keyword id="KW-0574">Periplasm</keyword>
<keyword id="KW-0614">Plasmid</keyword>
<keyword id="KW-0732">Signal</keyword>
<keyword id="KW-0813">Transport</keyword>
<evidence type="ECO:0000250" key="1"/>
<evidence type="ECO:0000255" key="2"/>
<evidence type="ECO:0000305" key="3"/>
<proteinExistence type="inferred from homology"/>
<gene>
    <name type="primary">occT</name>
    <name type="synonym">occJ</name>
</gene>
<geneLocation type="plasmid">
    <name>pTiAch5</name>
</geneLocation>
<name>OCCT_AGRT4</name>
<comment type="function">
    <text evidence="1">Component of the octopine active transport system probably consisting of four subunits: Q, M, P and T.</text>
</comment>
<comment type="subcellular location">
    <subcellularLocation>
        <location evidence="1">Periplasm</location>
    </subcellularLocation>
</comment>
<comment type="induction">
    <text evidence="1">By octopine.</text>
</comment>
<comment type="similarity">
    <text evidence="3">Belongs to the bacterial solute-binding protein 3 family.</text>
</comment>
<accession>P0A4F9</accession>
<accession>P35121</accession>
<feature type="signal peptide" evidence="2">
    <location>
        <begin position="1"/>
        <end position="20"/>
    </location>
</feature>
<feature type="chain" id="PRO_0000031769" description="Octopine-binding periplasmic protein">
    <location>
        <begin position="21"/>
        <end position="276"/>
    </location>
</feature>
<feature type="disulfide bond" evidence="1">
    <location>
        <begin position="57"/>
        <end position="64"/>
    </location>
</feature>
<protein>
    <recommendedName>
        <fullName>Octopine-binding periplasmic protein</fullName>
    </recommendedName>
</protein>